<gene>
    <name type="primary">Cyp3a25</name>
</gene>
<proteinExistence type="evidence at protein level"/>
<organism>
    <name type="scientific">Mus musculus</name>
    <name type="common">Mouse</name>
    <dbReference type="NCBI Taxonomy" id="10090"/>
    <lineage>
        <taxon>Eukaryota</taxon>
        <taxon>Metazoa</taxon>
        <taxon>Chordata</taxon>
        <taxon>Craniata</taxon>
        <taxon>Vertebrata</taxon>
        <taxon>Euteleostomi</taxon>
        <taxon>Mammalia</taxon>
        <taxon>Eutheria</taxon>
        <taxon>Euarchontoglires</taxon>
        <taxon>Glires</taxon>
        <taxon>Rodentia</taxon>
        <taxon>Myomorpha</taxon>
        <taxon>Muroidea</taxon>
        <taxon>Muridae</taxon>
        <taxon>Murinae</taxon>
        <taxon>Mus</taxon>
        <taxon>Mus</taxon>
    </lineage>
</organism>
<feature type="chain" id="PRO_0000051805" description="Cytochrome P450 3A25">
    <location>
        <begin position="1"/>
        <end position="503"/>
    </location>
</feature>
<feature type="binding site" description="axial binding residue" evidence="1">
    <location>
        <position position="442"/>
    </location>
    <ligand>
        <name>heme</name>
        <dbReference type="ChEBI" id="CHEBI:30413"/>
    </ligand>
    <ligandPart>
        <name>Fe</name>
        <dbReference type="ChEBI" id="CHEBI:18248"/>
    </ligandPart>
</feature>
<name>CP3AP_MOUSE</name>
<evidence type="ECO:0000250" key="1"/>
<evidence type="ECO:0000305" key="2"/>
<accession>O09158</accession>
<reference key="1">
    <citation type="submission" date="1997-03" db="EMBL/GenBank/DDBJ databases">
        <authorList>
            <person name="Mahnke A."/>
            <person name="Roos P."/>
            <person name="Hanstein W.G."/>
        </authorList>
    </citation>
    <scope>NUCLEOTIDE SEQUENCE [MRNA]</scope>
</reference>
<reference key="2">
    <citation type="journal article" date="2004" name="Genome Res.">
        <title>The status, quality, and expansion of the NIH full-length cDNA project: the Mammalian Gene Collection (MGC).</title>
        <authorList>
            <consortium name="The MGC Project Team"/>
        </authorList>
    </citation>
    <scope>NUCLEOTIDE SEQUENCE [LARGE SCALE MRNA]</scope>
    <source>
        <strain>FVB/N</strain>
        <tissue>Liver</tissue>
    </source>
</reference>
<reference key="3">
    <citation type="journal article" date="2010" name="Cell">
        <title>A tissue-specific atlas of mouse protein phosphorylation and expression.</title>
        <authorList>
            <person name="Huttlin E.L."/>
            <person name="Jedrychowski M.P."/>
            <person name="Elias J.E."/>
            <person name="Goswami T."/>
            <person name="Rad R."/>
            <person name="Beausoleil S.A."/>
            <person name="Villen J."/>
            <person name="Haas W."/>
            <person name="Sowa M.E."/>
            <person name="Gygi S.P."/>
        </authorList>
    </citation>
    <scope>IDENTIFICATION BY MASS SPECTROMETRY [LARGE SCALE ANALYSIS]</scope>
    <source>
        <tissue>Liver</tissue>
    </source>
</reference>
<dbReference type="EC" id="1.14.14.1"/>
<dbReference type="EMBL" id="Y11995">
    <property type="protein sequence ID" value="CAA72720.1"/>
    <property type="molecule type" value="mRNA"/>
</dbReference>
<dbReference type="EMBL" id="BC028855">
    <property type="protein sequence ID" value="AAH28855.1"/>
    <property type="molecule type" value="mRNA"/>
</dbReference>
<dbReference type="CCDS" id="CCDS19866.1"/>
<dbReference type="RefSeq" id="NP_062766.2">
    <property type="nucleotide sequence ID" value="NM_019792.2"/>
</dbReference>
<dbReference type="SMR" id="O09158"/>
<dbReference type="BioGRID" id="207946">
    <property type="interactions" value="6"/>
</dbReference>
<dbReference type="FunCoup" id="O09158">
    <property type="interactions" value="205"/>
</dbReference>
<dbReference type="STRING" id="10090.ENSMUSP00000065585"/>
<dbReference type="ChEMBL" id="CHEMBL3637781"/>
<dbReference type="iPTMnet" id="O09158"/>
<dbReference type="PhosphoSitePlus" id="O09158"/>
<dbReference type="SwissPalm" id="O09158"/>
<dbReference type="jPOST" id="O09158"/>
<dbReference type="PaxDb" id="10090-ENSMUSP00000065585"/>
<dbReference type="PeptideAtlas" id="O09158"/>
<dbReference type="ProteomicsDB" id="283813"/>
<dbReference type="DNASU" id="56388"/>
<dbReference type="Ensembl" id="ENSMUST00000068317.13">
    <property type="protein sequence ID" value="ENSMUSP00000065585.7"/>
    <property type="gene ID" value="ENSMUSG00000029630.16"/>
</dbReference>
<dbReference type="GeneID" id="56388"/>
<dbReference type="KEGG" id="mmu:56388"/>
<dbReference type="UCSC" id="uc009amz.2">
    <property type="organism name" value="mouse"/>
</dbReference>
<dbReference type="AGR" id="MGI:1930638"/>
<dbReference type="CTD" id="56388"/>
<dbReference type="MGI" id="MGI:1930638">
    <property type="gene designation" value="Cyp3a25"/>
</dbReference>
<dbReference type="VEuPathDB" id="HostDB:ENSMUSG00000029630"/>
<dbReference type="eggNOG" id="KOG0158">
    <property type="taxonomic scope" value="Eukaryota"/>
</dbReference>
<dbReference type="GeneTree" id="ENSGT00950000182958"/>
<dbReference type="HOGENOM" id="CLU_001570_5_2_1"/>
<dbReference type="InParanoid" id="O09158"/>
<dbReference type="OMA" id="FALQEMH"/>
<dbReference type="OrthoDB" id="1470350at2759"/>
<dbReference type="PhylomeDB" id="O09158"/>
<dbReference type="TreeFam" id="TF105087"/>
<dbReference type="Reactome" id="R-MMU-211945">
    <property type="pathway name" value="Phase I - Functionalization of compounds"/>
</dbReference>
<dbReference type="Reactome" id="R-MMU-211958">
    <property type="pathway name" value="Miscellaneous substrates"/>
</dbReference>
<dbReference type="Reactome" id="R-MMU-211981">
    <property type="pathway name" value="Xenobiotics"/>
</dbReference>
<dbReference type="Reactome" id="R-MMU-5423646">
    <property type="pathway name" value="Aflatoxin activation and detoxification"/>
</dbReference>
<dbReference type="Reactome" id="R-MMU-9027307">
    <property type="pathway name" value="Biosynthesis of maresin-like SPMs"/>
</dbReference>
<dbReference type="Reactome" id="R-MMU-9749641">
    <property type="pathway name" value="Aspirin ADME"/>
</dbReference>
<dbReference type="Reactome" id="R-MMU-9754706">
    <property type="pathway name" value="Atorvastatin ADME"/>
</dbReference>
<dbReference type="Reactome" id="R-MMU-9757110">
    <property type="pathway name" value="Prednisone ADME"/>
</dbReference>
<dbReference type="BioGRID-ORCS" id="56388">
    <property type="hits" value="2 hits in 47 CRISPR screens"/>
</dbReference>
<dbReference type="ChiTaRS" id="Cyp3a25">
    <property type="organism name" value="mouse"/>
</dbReference>
<dbReference type="PRO" id="PR:O09158"/>
<dbReference type="Proteomes" id="UP000000589">
    <property type="component" value="Chromosome 5"/>
</dbReference>
<dbReference type="RNAct" id="O09158">
    <property type="molecule type" value="protein"/>
</dbReference>
<dbReference type="Bgee" id="ENSMUSG00000029630">
    <property type="expression patterns" value="Expressed in small intestine Peyer's patch and 31 other cell types or tissues"/>
</dbReference>
<dbReference type="ExpressionAtlas" id="O09158">
    <property type="expression patterns" value="baseline and differential"/>
</dbReference>
<dbReference type="GO" id="GO:0005789">
    <property type="term" value="C:endoplasmic reticulum membrane"/>
    <property type="evidence" value="ECO:0007669"/>
    <property type="project" value="UniProtKB-SubCell"/>
</dbReference>
<dbReference type="GO" id="GO:0020037">
    <property type="term" value="F:heme binding"/>
    <property type="evidence" value="ECO:0007669"/>
    <property type="project" value="InterPro"/>
</dbReference>
<dbReference type="GO" id="GO:0005506">
    <property type="term" value="F:iron ion binding"/>
    <property type="evidence" value="ECO:0007669"/>
    <property type="project" value="InterPro"/>
</dbReference>
<dbReference type="GO" id="GO:0016712">
    <property type="term" value="F:oxidoreductase activity, acting on paired donors, with incorporation or reduction of molecular oxygen, reduced flavin or flavoprotein as one donor, and incorporation of one atom of oxygen"/>
    <property type="evidence" value="ECO:0007669"/>
    <property type="project" value="UniProtKB-EC"/>
</dbReference>
<dbReference type="GO" id="GO:0009617">
    <property type="term" value="P:response to bacterium"/>
    <property type="evidence" value="ECO:0000270"/>
    <property type="project" value="MGI"/>
</dbReference>
<dbReference type="CDD" id="cd20650">
    <property type="entry name" value="CYP3A"/>
    <property type="match status" value="1"/>
</dbReference>
<dbReference type="FunFam" id="1.10.630.10:FF:000182">
    <property type="entry name" value="Cytochrome P450 3A4"/>
    <property type="match status" value="1"/>
</dbReference>
<dbReference type="Gene3D" id="1.10.630.10">
    <property type="entry name" value="Cytochrome P450"/>
    <property type="match status" value="1"/>
</dbReference>
<dbReference type="InterPro" id="IPR001128">
    <property type="entry name" value="Cyt_P450"/>
</dbReference>
<dbReference type="InterPro" id="IPR017972">
    <property type="entry name" value="Cyt_P450_CS"/>
</dbReference>
<dbReference type="InterPro" id="IPR008072">
    <property type="entry name" value="Cyt_P450_E_CYP3A"/>
</dbReference>
<dbReference type="InterPro" id="IPR002402">
    <property type="entry name" value="Cyt_P450_E_grp-II"/>
</dbReference>
<dbReference type="InterPro" id="IPR036396">
    <property type="entry name" value="Cyt_P450_sf"/>
</dbReference>
<dbReference type="InterPro" id="IPR050705">
    <property type="entry name" value="Cytochrome_P450_3A"/>
</dbReference>
<dbReference type="PANTHER" id="PTHR24302:SF8">
    <property type="entry name" value="CYTOCHROME P450 3A-RELATED"/>
    <property type="match status" value="1"/>
</dbReference>
<dbReference type="PANTHER" id="PTHR24302">
    <property type="entry name" value="CYTOCHROME P450 FAMILY 3"/>
    <property type="match status" value="1"/>
</dbReference>
<dbReference type="Pfam" id="PF00067">
    <property type="entry name" value="p450"/>
    <property type="match status" value="1"/>
</dbReference>
<dbReference type="PRINTS" id="PR00464">
    <property type="entry name" value="EP450II"/>
</dbReference>
<dbReference type="PRINTS" id="PR01689">
    <property type="entry name" value="EP450IICYP3A"/>
</dbReference>
<dbReference type="PRINTS" id="PR00385">
    <property type="entry name" value="P450"/>
</dbReference>
<dbReference type="SUPFAM" id="SSF48264">
    <property type="entry name" value="Cytochrome P450"/>
    <property type="match status" value="1"/>
</dbReference>
<dbReference type="PROSITE" id="PS00086">
    <property type="entry name" value="CYTOCHROME_P450"/>
    <property type="match status" value="1"/>
</dbReference>
<comment type="function">
    <text>Cytochromes P450 are a group of heme-thiolate monooxygenases. In liver microsomes, this enzyme is involved in an NADPH-dependent electron transport pathway. It oxidizes a variety of structurally unrelated compounds, including steroids, fatty acids, and xenobiotics.</text>
</comment>
<comment type="catalytic activity">
    <reaction>
        <text>an organic molecule + reduced [NADPH--hemoprotein reductase] + O2 = an alcohol + oxidized [NADPH--hemoprotein reductase] + H2O + H(+)</text>
        <dbReference type="Rhea" id="RHEA:17149"/>
        <dbReference type="Rhea" id="RHEA-COMP:11964"/>
        <dbReference type="Rhea" id="RHEA-COMP:11965"/>
        <dbReference type="ChEBI" id="CHEBI:15377"/>
        <dbReference type="ChEBI" id="CHEBI:15378"/>
        <dbReference type="ChEBI" id="CHEBI:15379"/>
        <dbReference type="ChEBI" id="CHEBI:30879"/>
        <dbReference type="ChEBI" id="CHEBI:57618"/>
        <dbReference type="ChEBI" id="CHEBI:58210"/>
        <dbReference type="ChEBI" id="CHEBI:142491"/>
        <dbReference type="EC" id="1.14.14.1"/>
    </reaction>
</comment>
<comment type="cofactor">
    <cofactor evidence="1">
        <name>heme</name>
        <dbReference type="ChEBI" id="CHEBI:30413"/>
    </cofactor>
</comment>
<comment type="subcellular location">
    <subcellularLocation>
        <location>Endoplasmic reticulum membrane</location>
        <topology>Peripheral membrane protein</topology>
    </subcellularLocation>
    <subcellularLocation>
        <location>Microsome membrane</location>
        <topology>Peripheral membrane protein</topology>
    </subcellularLocation>
</comment>
<comment type="induction">
    <text>P450 can be induced to high levels in liver and other tissues by various foreign compounds, including drugs, pesticides, and carcinogens.</text>
</comment>
<comment type="similarity">
    <text evidence="2">Belongs to the cytochrome P450 family.</text>
</comment>
<sequence>MELIPNLSIETWVLLVTSLVLFYIYGTYSHGLFKKLGIPGPKPLPLLGTIFNYYDGMWKFDEDCYKKYGKIWGFYEGPQPILAIMDPEIIKIVLVKECYSVFTNRRFFGPVGFMKKAITISEDEEWKRLRTLLSPTFTSGKLKEMFPIMRQYGDILVRNLRREEEKGEPISMKDIFGAYSMDVITGTSFGVNVDSLNNPQDPFVQKAKKILKFKIFDPFLLSIILFPFLTPIYEMLNFSIFPRDSMNFFKKFVKRMKKERLASNQKNRVDFLQLMMNTQNSKGQESQKALSDLEMAAQAVIFIFGGYDATSTSISLIMYELATHPDVQKKLQDEIDRTLPNKAPVTYDALMDMEYLDMVVNESLRLYPIAIRLERVSKKDVEINGVFIPKGTVVMIPIYPLHRNPEYWPEPQEFCPERFSKENKGNIDPYIYMPFGNGPRNCIGMRFALISIKLAVIGVLQNFTVQPCEETQIPLKISREPIFQPEKPIILKVVSRDKPRTGS</sequence>
<protein>
    <recommendedName>
        <fullName>Cytochrome P450 3A25</fullName>
        <ecNumber>1.14.14.1</ecNumber>
    </recommendedName>
    <alternativeName>
        <fullName>CYPIIIA25</fullName>
    </alternativeName>
</protein>
<keyword id="KW-0256">Endoplasmic reticulum</keyword>
<keyword id="KW-0349">Heme</keyword>
<keyword id="KW-0408">Iron</keyword>
<keyword id="KW-0472">Membrane</keyword>
<keyword id="KW-0479">Metal-binding</keyword>
<keyword id="KW-0492">Microsome</keyword>
<keyword id="KW-0503">Monooxygenase</keyword>
<keyword id="KW-0560">Oxidoreductase</keyword>
<keyword id="KW-1185">Reference proteome</keyword>